<proteinExistence type="inferred from homology"/>
<name>TPIS_KLULA</name>
<feature type="chain" id="PRO_0000090163" description="Triosephosphate isomerase">
    <location>
        <begin position="1"/>
        <end position="248"/>
    </location>
</feature>
<feature type="active site" description="Electrophile" evidence="1">
    <location>
        <position position="95"/>
    </location>
</feature>
<feature type="active site" description="Proton acceptor" evidence="1">
    <location>
        <position position="165"/>
    </location>
</feature>
<feature type="binding site" evidence="1">
    <location>
        <position position="10"/>
    </location>
    <ligand>
        <name>substrate</name>
    </ligand>
</feature>
<feature type="binding site" evidence="1">
    <location>
        <position position="12"/>
    </location>
    <ligand>
        <name>substrate</name>
    </ligand>
</feature>
<keyword id="KW-0312">Gluconeogenesis</keyword>
<keyword id="KW-0324">Glycolysis</keyword>
<keyword id="KW-0413">Isomerase</keyword>
<keyword id="KW-1185">Reference proteome</keyword>
<gene>
    <name type="primary">TPI1</name>
    <name type="ordered locus">KLLA0F18832g</name>
</gene>
<reference key="1">
    <citation type="journal article" date="2004" name="Nature">
        <title>Genome evolution in yeasts.</title>
        <authorList>
            <person name="Dujon B."/>
            <person name="Sherman D."/>
            <person name="Fischer G."/>
            <person name="Durrens P."/>
            <person name="Casaregola S."/>
            <person name="Lafontaine I."/>
            <person name="de Montigny J."/>
            <person name="Marck C."/>
            <person name="Neuveglise C."/>
            <person name="Talla E."/>
            <person name="Goffard N."/>
            <person name="Frangeul L."/>
            <person name="Aigle M."/>
            <person name="Anthouard V."/>
            <person name="Babour A."/>
            <person name="Barbe V."/>
            <person name="Barnay S."/>
            <person name="Blanchin S."/>
            <person name="Beckerich J.-M."/>
            <person name="Beyne E."/>
            <person name="Bleykasten C."/>
            <person name="Boisrame A."/>
            <person name="Boyer J."/>
            <person name="Cattolico L."/>
            <person name="Confanioleri F."/>
            <person name="de Daruvar A."/>
            <person name="Despons L."/>
            <person name="Fabre E."/>
            <person name="Fairhead C."/>
            <person name="Ferry-Dumazet H."/>
            <person name="Groppi A."/>
            <person name="Hantraye F."/>
            <person name="Hennequin C."/>
            <person name="Jauniaux N."/>
            <person name="Joyet P."/>
            <person name="Kachouri R."/>
            <person name="Kerrest A."/>
            <person name="Koszul R."/>
            <person name="Lemaire M."/>
            <person name="Lesur I."/>
            <person name="Ma L."/>
            <person name="Muller H."/>
            <person name="Nicaud J.-M."/>
            <person name="Nikolski M."/>
            <person name="Oztas S."/>
            <person name="Ozier-Kalogeropoulos O."/>
            <person name="Pellenz S."/>
            <person name="Potier S."/>
            <person name="Richard G.-F."/>
            <person name="Straub M.-L."/>
            <person name="Suleau A."/>
            <person name="Swennen D."/>
            <person name="Tekaia F."/>
            <person name="Wesolowski-Louvel M."/>
            <person name="Westhof E."/>
            <person name="Wirth B."/>
            <person name="Zeniou-Meyer M."/>
            <person name="Zivanovic Y."/>
            <person name="Bolotin-Fukuhara M."/>
            <person name="Thierry A."/>
            <person name="Bouchier C."/>
            <person name="Caudron B."/>
            <person name="Scarpelli C."/>
            <person name="Gaillardin C."/>
            <person name="Weissenbach J."/>
            <person name="Wincker P."/>
            <person name="Souciet J.-L."/>
        </authorList>
    </citation>
    <scope>NUCLEOTIDE SEQUENCE [LARGE SCALE GENOMIC DNA]</scope>
    <source>
        <strain>ATCC 8585 / CBS 2359 / DSM 70799 / NBRC 1267 / NRRL Y-1140 / WM37</strain>
    </source>
</reference>
<dbReference type="EC" id="5.3.1.1"/>
<dbReference type="EMBL" id="CR382126">
    <property type="protein sequence ID" value="CAG98632.2"/>
    <property type="molecule type" value="Genomic_DNA"/>
</dbReference>
<dbReference type="RefSeq" id="XP_455924.2">
    <property type="nucleotide sequence ID" value="XM_455924.2"/>
</dbReference>
<dbReference type="SMR" id="Q6CJG5"/>
<dbReference type="FunCoup" id="Q6CJG5">
    <property type="interactions" value="735"/>
</dbReference>
<dbReference type="STRING" id="284590.Q6CJG5"/>
<dbReference type="PaxDb" id="284590-Q6CJG5"/>
<dbReference type="KEGG" id="kla:KLLA0_F18832g"/>
<dbReference type="eggNOG" id="KOG1643">
    <property type="taxonomic scope" value="Eukaryota"/>
</dbReference>
<dbReference type="HOGENOM" id="CLU_024251_2_0_1"/>
<dbReference type="InParanoid" id="Q6CJG5"/>
<dbReference type="UniPathway" id="UPA00109">
    <property type="reaction ID" value="UER00189"/>
</dbReference>
<dbReference type="UniPathway" id="UPA00138"/>
<dbReference type="Proteomes" id="UP000000598">
    <property type="component" value="Chromosome F"/>
</dbReference>
<dbReference type="GO" id="GO:0005829">
    <property type="term" value="C:cytosol"/>
    <property type="evidence" value="ECO:0007669"/>
    <property type="project" value="TreeGrafter"/>
</dbReference>
<dbReference type="GO" id="GO:0004807">
    <property type="term" value="F:triose-phosphate isomerase activity"/>
    <property type="evidence" value="ECO:0007669"/>
    <property type="project" value="UniProtKB-EC"/>
</dbReference>
<dbReference type="GO" id="GO:0006094">
    <property type="term" value="P:gluconeogenesis"/>
    <property type="evidence" value="ECO:0007669"/>
    <property type="project" value="UniProtKB-UniPathway"/>
</dbReference>
<dbReference type="GO" id="GO:0046166">
    <property type="term" value="P:glyceraldehyde-3-phosphate biosynthetic process"/>
    <property type="evidence" value="ECO:0007669"/>
    <property type="project" value="TreeGrafter"/>
</dbReference>
<dbReference type="GO" id="GO:0019563">
    <property type="term" value="P:glycerol catabolic process"/>
    <property type="evidence" value="ECO:0007669"/>
    <property type="project" value="TreeGrafter"/>
</dbReference>
<dbReference type="GO" id="GO:0006096">
    <property type="term" value="P:glycolytic process"/>
    <property type="evidence" value="ECO:0007669"/>
    <property type="project" value="UniProtKB-UniPathway"/>
</dbReference>
<dbReference type="CDD" id="cd00311">
    <property type="entry name" value="TIM"/>
    <property type="match status" value="1"/>
</dbReference>
<dbReference type="FunFam" id="3.20.20.70:FF:000025">
    <property type="entry name" value="Triosephosphate isomerase"/>
    <property type="match status" value="1"/>
</dbReference>
<dbReference type="Gene3D" id="3.20.20.70">
    <property type="entry name" value="Aldolase class I"/>
    <property type="match status" value="1"/>
</dbReference>
<dbReference type="HAMAP" id="MF_00147_B">
    <property type="entry name" value="TIM_B"/>
    <property type="match status" value="1"/>
</dbReference>
<dbReference type="InterPro" id="IPR013785">
    <property type="entry name" value="Aldolase_TIM"/>
</dbReference>
<dbReference type="InterPro" id="IPR035990">
    <property type="entry name" value="TIM_sf"/>
</dbReference>
<dbReference type="InterPro" id="IPR022896">
    <property type="entry name" value="TrioseP_Isoase_bac/euk"/>
</dbReference>
<dbReference type="InterPro" id="IPR000652">
    <property type="entry name" value="Triosephosphate_isomerase"/>
</dbReference>
<dbReference type="InterPro" id="IPR020861">
    <property type="entry name" value="Triosephosphate_isomerase_AS"/>
</dbReference>
<dbReference type="NCBIfam" id="TIGR00419">
    <property type="entry name" value="tim"/>
    <property type="match status" value="1"/>
</dbReference>
<dbReference type="PANTHER" id="PTHR21139">
    <property type="entry name" value="TRIOSEPHOSPHATE ISOMERASE"/>
    <property type="match status" value="1"/>
</dbReference>
<dbReference type="PANTHER" id="PTHR21139:SF41">
    <property type="entry name" value="TRIOSEPHOSPHATE ISOMERASE"/>
    <property type="match status" value="1"/>
</dbReference>
<dbReference type="Pfam" id="PF00121">
    <property type="entry name" value="TIM"/>
    <property type="match status" value="1"/>
</dbReference>
<dbReference type="SUPFAM" id="SSF51351">
    <property type="entry name" value="Triosephosphate isomerase (TIM)"/>
    <property type="match status" value="1"/>
</dbReference>
<dbReference type="PROSITE" id="PS00171">
    <property type="entry name" value="TIM_1"/>
    <property type="match status" value="1"/>
</dbReference>
<dbReference type="PROSITE" id="PS51440">
    <property type="entry name" value="TIM_2"/>
    <property type="match status" value="1"/>
</dbReference>
<comment type="catalytic activity">
    <reaction>
        <text>D-glyceraldehyde 3-phosphate = dihydroxyacetone phosphate</text>
        <dbReference type="Rhea" id="RHEA:18585"/>
        <dbReference type="ChEBI" id="CHEBI:57642"/>
        <dbReference type="ChEBI" id="CHEBI:59776"/>
        <dbReference type="EC" id="5.3.1.1"/>
    </reaction>
</comment>
<comment type="pathway">
    <text>Carbohydrate biosynthesis; gluconeogenesis.</text>
</comment>
<comment type="pathway">
    <text>Carbohydrate degradation; glycolysis; D-glyceraldehyde 3-phosphate from glycerone phosphate: step 1/1.</text>
</comment>
<comment type="subunit">
    <text evidence="1">Homodimer.</text>
</comment>
<comment type="similarity">
    <text evidence="2">Belongs to the triosephosphate isomerase family.</text>
</comment>
<organism>
    <name type="scientific">Kluyveromyces lactis (strain ATCC 8585 / CBS 2359 / DSM 70799 / NBRC 1267 / NRRL Y-1140 / WM37)</name>
    <name type="common">Yeast</name>
    <name type="synonym">Candida sphaerica</name>
    <dbReference type="NCBI Taxonomy" id="284590"/>
    <lineage>
        <taxon>Eukaryota</taxon>
        <taxon>Fungi</taxon>
        <taxon>Dikarya</taxon>
        <taxon>Ascomycota</taxon>
        <taxon>Saccharomycotina</taxon>
        <taxon>Saccharomycetes</taxon>
        <taxon>Saccharomycetales</taxon>
        <taxon>Saccharomycetaceae</taxon>
        <taxon>Kluyveromyces</taxon>
    </lineage>
</organism>
<accession>Q6CJG5</accession>
<sequence>MARTFFIGGNFKMNGSKASIKEIVDRLNGASIPSNVEVVIAPPAIYLDHAVALNKRKEVKISAQNAYSKASGAYTGENSVEQIKDVGAEWVILGHSERRTYFNETDEIVAEKTKFALDSGVKVILCIGETLEEKQQNITLQVVQRQLQAVLEKVQDWTNVVVAYEPVWAIGTGLAATAEDAQDIHHSIREFLAEKLSRDVADSVRILYGGSANGKNAVTFKDKADVDGFLVGGASLKPEFVDIINSRV</sequence>
<evidence type="ECO:0000250" key="1"/>
<evidence type="ECO:0000305" key="2"/>
<protein>
    <recommendedName>
        <fullName>Triosephosphate isomerase</fullName>
        <shortName>TIM</shortName>
        <ecNumber>5.3.1.1</ecNumber>
    </recommendedName>
    <alternativeName>
        <fullName>Triose-phosphate isomerase</fullName>
    </alternativeName>
</protein>